<gene>
    <name type="primary">AQP</name>
</gene>
<accession>Q1M2P4</accession>
<protein>
    <recommendedName>
        <fullName>Aquaporin</fullName>
    </recommendedName>
</protein>
<proteinExistence type="inferred from homology"/>
<dbReference type="EMBL" id="AY286013">
    <property type="protein sequence ID" value="AAQ23044.1"/>
    <property type="molecule type" value="Genomic_DNA"/>
</dbReference>
<dbReference type="SMR" id="Q1M2P4"/>
<dbReference type="VEuPathDB" id="MicrosporidiaDB:Eint_070680"/>
<dbReference type="GO" id="GO:0005886">
    <property type="term" value="C:plasma membrane"/>
    <property type="evidence" value="ECO:0007669"/>
    <property type="project" value="UniProtKB-SubCell"/>
</dbReference>
<dbReference type="GO" id="GO:0015250">
    <property type="term" value="F:water channel activity"/>
    <property type="evidence" value="ECO:0007669"/>
    <property type="project" value="TreeGrafter"/>
</dbReference>
<dbReference type="Gene3D" id="1.20.1080.10">
    <property type="entry name" value="Glycerol uptake facilitator protein"/>
    <property type="match status" value="1"/>
</dbReference>
<dbReference type="InterPro" id="IPR023271">
    <property type="entry name" value="Aquaporin-like"/>
</dbReference>
<dbReference type="InterPro" id="IPR034294">
    <property type="entry name" value="Aquaporin_transptr"/>
</dbReference>
<dbReference type="InterPro" id="IPR000425">
    <property type="entry name" value="MIP"/>
</dbReference>
<dbReference type="InterPro" id="IPR022357">
    <property type="entry name" value="MIP_CS"/>
</dbReference>
<dbReference type="PANTHER" id="PTHR19139">
    <property type="entry name" value="AQUAPORIN TRANSPORTER"/>
    <property type="match status" value="1"/>
</dbReference>
<dbReference type="PANTHER" id="PTHR19139:SF199">
    <property type="entry name" value="MIP17260P"/>
    <property type="match status" value="1"/>
</dbReference>
<dbReference type="Pfam" id="PF00230">
    <property type="entry name" value="MIP"/>
    <property type="match status" value="1"/>
</dbReference>
<dbReference type="PRINTS" id="PR00783">
    <property type="entry name" value="MINTRINSICP"/>
</dbReference>
<dbReference type="SUPFAM" id="SSF81338">
    <property type="entry name" value="Aquaporin-like"/>
    <property type="match status" value="1"/>
</dbReference>
<dbReference type="PROSITE" id="PS00221">
    <property type="entry name" value="MIP"/>
    <property type="match status" value="1"/>
</dbReference>
<reference key="1">
    <citation type="submission" date="2003-04" db="EMBL/GenBank/DDBJ databases">
        <title>Role for aquaporins in Encephalitozoon intestinalis.</title>
        <authorList>
            <person name="Wasson K."/>
            <person name="Barry P.A."/>
        </authorList>
    </citation>
    <scope>NUCLEOTIDE SEQUENCE [GENOMIC DNA]</scope>
</reference>
<organism>
    <name type="scientific">Encephalitozoon intestinalis</name>
    <name type="common">Microsporidian parasite</name>
    <dbReference type="NCBI Taxonomy" id="58839"/>
    <lineage>
        <taxon>Eukaryota</taxon>
        <taxon>Fungi</taxon>
        <taxon>Fungi incertae sedis</taxon>
        <taxon>Microsporidia</taxon>
        <taxon>Unikaryonidae</taxon>
        <taxon>Encephalitozoon</taxon>
    </lineage>
</organism>
<name>AQP_ENCIN</name>
<keyword id="KW-1003">Cell membrane</keyword>
<keyword id="KW-0472">Membrane</keyword>
<keyword id="KW-0677">Repeat</keyword>
<keyword id="KW-0812">Transmembrane</keyword>
<keyword id="KW-1133">Transmembrane helix</keyword>
<keyword id="KW-0813">Transport</keyword>
<sequence length="251" mass="26844">MAKEALKTLQSMFGEMVASFVFGFAVYSAILGSSISQSSADKVIVGLTVGFSGIGVIYSFCDVTIAHFNPAITLAAILTSKIDVLQGLGYMLAQYIGFMLAVCALLVCSPVEYKETLDTIRPGPTDFGATSLNVFFAEFFLTAIFVHIVFATAVNPYKPKVDTEGKFVDPDEKEPVDRRITAPLCIGLTLGFLAFMGLASSGGAFNPGLTFAPMAMSNTWSHFWIYLGGQYLGGLTGGLLQVLVLYKLSSD</sequence>
<comment type="function">
    <text evidence="1">Water channel required to facilitate the transport of water across membranes. Involved in osmotolerance (By similarity).</text>
</comment>
<comment type="subcellular location">
    <subcellularLocation>
        <location evidence="1">Cell membrane</location>
        <topology evidence="1">Multi-pass membrane protein</topology>
    </subcellularLocation>
</comment>
<comment type="domain">
    <text>Aquaporins contain two tandem repeats each containing three membrane-spanning domains and a pore-forming loop with the signature motif Asn-Pro-Ala (NPA). In microsporidia, the second signature motif differs slightly and is Asn-Pro-Gly (NPG).</text>
</comment>
<comment type="similarity">
    <text evidence="3">Belongs to the MIP/aquaporin (TC 1.A.8) family.</text>
</comment>
<feature type="chain" id="PRO_0000385186" description="Aquaporin">
    <location>
        <begin position="1"/>
        <end position="251"/>
    </location>
</feature>
<feature type="topological domain" description="Cytoplasmic" evidence="2">
    <location>
        <begin position="1"/>
        <end position="11"/>
    </location>
</feature>
<feature type="transmembrane region" description="Helical" evidence="2">
    <location>
        <begin position="12"/>
        <end position="32"/>
    </location>
</feature>
<feature type="topological domain" description="Extracellular" evidence="2">
    <location>
        <begin position="33"/>
        <end position="42"/>
    </location>
</feature>
<feature type="transmembrane region" description="Helical" evidence="2">
    <location>
        <begin position="43"/>
        <end position="63"/>
    </location>
</feature>
<feature type="topological domain" description="Cytoplasmic" evidence="2">
    <location>
        <begin position="64"/>
        <end position="86"/>
    </location>
</feature>
<feature type="transmembrane region" description="Helical" evidence="2">
    <location>
        <begin position="87"/>
        <end position="107"/>
    </location>
</feature>
<feature type="topological domain" description="Extracellular" evidence="2">
    <location>
        <begin position="108"/>
        <end position="133"/>
    </location>
</feature>
<feature type="transmembrane region" description="Helical" evidence="2">
    <location>
        <begin position="134"/>
        <end position="154"/>
    </location>
</feature>
<feature type="topological domain" description="Cytoplasmic" evidence="2">
    <location>
        <begin position="155"/>
        <end position="179"/>
    </location>
</feature>
<feature type="transmembrane region" description="Helical" evidence="2">
    <location>
        <begin position="180"/>
        <end position="200"/>
    </location>
</feature>
<feature type="topological domain" description="Extracellular" evidence="2">
    <location>
        <begin position="201"/>
        <end position="224"/>
    </location>
</feature>
<feature type="transmembrane region" description="Helical" evidence="2">
    <location>
        <begin position="225"/>
        <end position="245"/>
    </location>
</feature>
<feature type="topological domain" description="Cytoplasmic" evidence="2">
    <location>
        <begin position="246"/>
        <end position="251"/>
    </location>
</feature>
<feature type="short sequence motif" description="NPA">
    <location>
        <begin position="69"/>
        <end position="71"/>
    </location>
</feature>
<feature type="short sequence motif" description="NPG">
    <location>
        <begin position="206"/>
        <end position="208"/>
    </location>
</feature>
<evidence type="ECO:0000250" key="1"/>
<evidence type="ECO:0000255" key="2"/>
<evidence type="ECO:0000305" key="3"/>